<keyword id="KW-0067">ATP-binding</keyword>
<keyword id="KW-1003">Cell membrane</keyword>
<keyword id="KW-1015">Disulfide bond</keyword>
<keyword id="KW-0325">Glycoprotein</keyword>
<keyword id="KW-0391">Immunity</keyword>
<keyword id="KW-0393">Immunoglobulin domain</keyword>
<keyword id="KW-0395">Inflammatory response</keyword>
<keyword id="KW-0399">Innate immunity</keyword>
<keyword id="KW-0418">Kinase</keyword>
<keyword id="KW-0472">Membrane</keyword>
<keyword id="KW-0547">Nucleotide-binding</keyword>
<keyword id="KW-0597">Phosphoprotein</keyword>
<keyword id="KW-0656">Proto-oncogene</keyword>
<keyword id="KW-0675">Receptor</keyword>
<keyword id="KW-1185">Reference proteome</keyword>
<keyword id="KW-0677">Repeat</keyword>
<keyword id="KW-0732">Signal</keyword>
<keyword id="KW-0808">Transferase</keyword>
<keyword id="KW-0812">Transmembrane</keyword>
<keyword id="KW-1133">Transmembrane helix</keyword>
<keyword id="KW-0829">Tyrosine-protein kinase</keyword>
<keyword id="KW-0832">Ubl conjugation</keyword>
<accession>P13369</accession>
<evidence type="ECO:0000250" key="1"/>
<evidence type="ECO:0000250" key="2">
    <source>
        <dbReference type="UniProtKB" id="P07333"/>
    </source>
</evidence>
<evidence type="ECO:0000250" key="3">
    <source>
        <dbReference type="UniProtKB" id="P09581"/>
    </source>
</evidence>
<evidence type="ECO:0000255" key="4"/>
<evidence type="ECO:0000255" key="5">
    <source>
        <dbReference type="PROSITE-ProRule" id="PRU00114"/>
    </source>
</evidence>
<evidence type="ECO:0000255" key="6">
    <source>
        <dbReference type="PROSITE-ProRule" id="PRU00159"/>
    </source>
</evidence>
<evidence type="ECO:0000255" key="7">
    <source>
        <dbReference type="PROSITE-ProRule" id="PRU10028"/>
    </source>
</evidence>
<evidence type="ECO:0000256" key="8">
    <source>
        <dbReference type="SAM" id="MobiDB-lite"/>
    </source>
</evidence>
<name>CSF1R_FELCA</name>
<feature type="signal peptide" evidence="4">
    <location>
        <begin position="1"/>
        <end position="19"/>
    </location>
</feature>
<feature type="chain" id="PRO_0000016764" description="Macrophage colony-stimulating factor 1 receptor">
    <location>
        <begin position="20"/>
        <end position="980"/>
    </location>
</feature>
<feature type="topological domain" description="Extracellular" evidence="4">
    <location>
        <begin position="20"/>
        <end position="514"/>
    </location>
</feature>
<feature type="transmembrane region" description="Helical" evidence="4">
    <location>
        <begin position="515"/>
        <end position="535"/>
    </location>
</feature>
<feature type="topological domain" description="Cytoplasmic" evidence="4">
    <location>
        <begin position="536"/>
        <end position="980"/>
    </location>
</feature>
<feature type="domain" description="Ig-like C2-type 1">
    <location>
        <begin position="21"/>
        <end position="100"/>
    </location>
</feature>
<feature type="domain" description="Ig-like C2-type 2">
    <location>
        <begin position="107"/>
        <end position="197"/>
    </location>
</feature>
<feature type="domain" description="Ig-like C2-type 3">
    <location>
        <begin position="202"/>
        <end position="297"/>
    </location>
</feature>
<feature type="domain" description="Ig-like C2-type 4">
    <location>
        <begin position="299"/>
        <end position="397"/>
    </location>
</feature>
<feature type="domain" description="Ig-like C2-type 5">
    <location>
        <begin position="400"/>
        <end position="499"/>
    </location>
</feature>
<feature type="domain" description="Protein kinase" evidence="6">
    <location>
        <begin position="579"/>
        <end position="908"/>
    </location>
</feature>
<feature type="region of interest" description="Regulatory juxtamembrane domain" evidence="1">
    <location>
        <begin position="539"/>
        <end position="571"/>
    </location>
</feature>
<feature type="region of interest" description="Disordered" evidence="8">
    <location>
        <begin position="723"/>
        <end position="743"/>
    </location>
</feature>
<feature type="region of interest" description="Activation loop" evidence="1">
    <location>
        <begin position="794"/>
        <end position="816"/>
    </location>
</feature>
<feature type="region of interest" description="Disordered" evidence="8">
    <location>
        <begin position="918"/>
        <end position="959"/>
    </location>
</feature>
<feature type="compositionally biased region" description="Low complexity" evidence="8">
    <location>
        <begin position="926"/>
        <end position="940"/>
    </location>
</feature>
<feature type="active site" description="Proton acceptor" evidence="6 7">
    <location>
        <position position="776"/>
    </location>
</feature>
<feature type="binding site" evidence="6">
    <location>
        <begin position="585"/>
        <end position="593"/>
    </location>
    <ligand>
        <name>ATP</name>
        <dbReference type="ChEBI" id="CHEBI:30616"/>
    </ligand>
</feature>
<feature type="binding site" evidence="6">
    <location>
        <position position="613"/>
    </location>
    <ligand>
        <name>ATP</name>
        <dbReference type="ChEBI" id="CHEBI:30616"/>
    </ligand>
</feature>
<feature type="modified residue" description="Phosphotyrosine; by autocatalysis" evidence="2">
    <location>
        <position position="543"/>
    </location>
</feature>
<feature type="modified residue" description="Phosphotyrosine; by autocatalysis" evidence="3">
    <location>
        <position position="558"/>
    </location>
</feature>
<feature type="modified residue" description="Phosphotyrosine; by autocatalysis" evidence="2">
    <location>
        <position position="696"/>
    </location>
</feature>
<feature type="modified residue" description="Phosphotyrosine; by autocatalysis" evidence="2">
    <location>
        <position position="705"/>
    </location>
</feature>
<feature type="modified residue" description="Phosphoserine" evidence="2">
    <location>
        <position position="710"/>
    </location>
</feature>
<feature type="modified residue" description="Phosphotyrosine; by autocatalysis" evidence="2">
    <location>
        <position position="720"/>
    </location>
</feature>
<feature type="modified residue" description="Phosphotyrosine; by autocatalysis" evidence="2">
    <location>
        <position position="807"/>
    </location>
</feature>
<feature type="modified residue" description="Phosphotyrosine; by autocatalysis" evidence="3">
    <location>
        <position position="921"/>
    </location>
</feature>
<feature type="modified residue" description="Phosphotyrosine; by autocatalysis" evidence="3">
    <location>
        <position position="977"/>
    </location>
</feature>
<feature type="glycosylation site" description="N-linked (GlcNAc...) asparagine" evidence="4">
    <location>
        <position position="45"/>
    </location>
</feature>
<feature type="glycosylation site" description="N-linked (GlcNAc...) asparagine" evidence="4">
    <location>
        <position position="73"/>
    </location>
</feature>
<feature type="glycosylation site" description="N-linked (GlcNAc...) asparagine" evidence="4">
    <location>
        <position position="94"/>
    </location>
</feature>
<feature type="glycosylation site" description="N-linked (GlcNAc...) asparagine" evidence="4">
    <location>
        <position position="153"/>
    </location>
</feature>
<feature type="glycosylation site" description="N-linked (GlcNAc...) asparagine" evidence="4">
    <location>
        <position position="275"/>
    </location>
</feature>
<feature type="glycosylation site" description="N-linked (GlcNAc...) asparagine" evidence="4">
    <location>
        <position position="286"/>
    </location>
</feature>
<feature type="glycosylation site" description="N-linked (GlcNAc...) asparagine" evidence="4">
    <location>
        <position position="302"/>
    </location>
</feature>
<feature type="glycosylation site" description="N-linked (GlcNAc...) asparagine" evidence="4">
    <location>
        <position position="335"/>
    </location>
</feature>
<feature type="glycosylation site" description="N-linked (GlcNAc...) asparagine" evidence="4">
    <location>
        <position position="410"/>
    </location>
</feature>
<feature type="glycosylation site" description="N-linked (GlcNAc...) asparagine" evidence="4">
    <location>
        <position position="477"/>
    </location>
</feature>
<feature type="glycosylation site" description="N-linked (GlcNAc...) asparagine" evidence="4">
    <location>
        <position position="490"/>
    </location>
</feature>
<feature type="disulfide bond" evidence="5">
    <location>
        <begin position="42"/>
        <end position="84"/>
    </location>
</feature>
<feature type="disulfide bond" evidence="5">
    <location>
        <begin position="127"/>
        <end position="177"/>
    </location>
</feature>
<feature type="disulfide bond" evidence="5">
    <location>
        <begin position="224"/>
        <end position="278"/>
    </location>
</feature>
<feature type="disulfide bond" evidence="5">
    <location>
        <begin position="417"/>
        <end position="482"/>
    </location>
</feature>
<sequence>MGPRALLVLLVATAWHAQGVPVIQPSGPELVVEPGTTVTLRCVGNGSVEWDGPISPHWNLDLDPPSSILTTNNATFQNTGTYHCTEPGNPQGGNATIHLYVKDPARPWKVLAQEVTVLEGQDALLPCLLTDPALEAGVSLVRVRGRPVLRQTNYSFSPWHGFTIHKAKFIENHVYQCSARVDGRTVTSMGIWLKVQKDISGPATLTLEPAELVRIQGEAAQIVCSASNIDVNFDVSLRHGDTKLTISQQSDFHDNRYQKVLTLNLDHVSFQDAGNYSCTATNAWGNHSASMVFRVVESAYLNLTSEQSLLQEVTVGEKVDLQVKVEAYPGLESFNWTYLGPFSDYQDKLDFVTIKDTYRYTSTLSLPRLKRSEAGRYSFLARNAGGQNALTFELTLRYPPEVRVTMTLINGSDTLLCEASGYPQPSVTWVQCRSHTDRCDESAGLVLEDSHSEVLSQVPFHEVIVHSLLAIGTLEHNRTYECRAFNSVGNSSQTFWPISIGAHTQLPDELLFTPVLLTCMSIMALLLLLLLLLLYKYKQKPKYQVRWKIIESYEGNSYTFIDPTQLPYNEKWEFPRNNLQFGKTLGAGAFGKVVEATAFGLGKEDAVLKVAVKMLKSTAHADEKEALMSELKIMSHLGQHENIVNLLGACTHGGPVLVITEYCCYGDLLNFLRRQAEAMLGPSLSVGQDPEAGAGYKNIHLEKKYVRRDSDFSSQGVDTYVEMRPVSTSSSNDSFSEEDLGKEDGRPLELRDLLHFSSQVAQGMAFLASKNCIHRDVAARNVLLTSGRVAKIGDFGLARDIMNDSNYIVKGNARLPVKWMAPESIFDCVYTVQSDVWSYGILLWEIFSLGLNPYPGILVNSKFYKLVKDGYQMAQPAFAPKNIYSIMQACWALEPTRRPTFQQICSLLQKQAQEDRRVPNYTNLPSSSSSSSSSSSSCRTGSGGGSSSEPEEESSSEHLACCEQGDIAQPLLQPNNYQFC</sequence>
<gene>
    <name type="primary">CSF1R</name>
    <name type="synonym">FMS</name>
</gene>
<organism>
    <name type="scientific">Felis catus</name>
    <name type="common">Cat</name>
    <name type="synonym">Felis silvestris catus</name>
    <dbReference type="NCBI Taxonomy" id="9685"/>
    <lineage>
        <taxon>Eukaryota</taxon>
        <taxon>Metazoa</taxon>
        <taxon>Chordata</taxon>
        <taxon>Craniata</taxon>
        <taxon>Vertebrata</taxon>
        <taxon>Euteleostomi</taxon>
        <taxon>Mammalia</taxon>
        <taxon>Eutheria</taxon>
        <taxon>Laurasiatheria</taxon>
        <taxon>Carnivora</taxon>
        <taxon>Feliformia</taxon>
        <taxon>Felidae</taxon>
        <taxon>Felinae</taxon>
        <taxon>Felis</taxon>
    </lineage>
</organism>
<proteinExistence type="evidence at transcript level"/>
<comment type="function">
    <text evidence="2">Tyrosine-protein kinase that acts as a cell-surface receptor for CSF1 and IL34 and plays an essential role in the regulation of survival, proliferation and differentiation of hematopoietic precursor cells, especially mononuclear phagocytes, such as macrophages and monocytes. Promotes the release of pro-inflammatory chemokines in response to IL34 and CSF1, and thereby plays an important role in innate immunity and in inflammatory processes. Plays an important role in the regulation of osteoclast proliferation and differentiation, the regulation of bone resorption, and is required for normal bone and tooth development. Required for normal male and female fertility, and for normal development of milk ducts and acinar structures in the mammary gland during pregnancy. Promotes reorganization of the actin cytoskeleton, regulates formation of membrane ruffles, cell adhesion and cell migration, and promotes cancer cell invasion. Activates several signaling pathways in response to ligand binding, including the ERK1/2 and the JNK pathway (By similarity). Phosphorylates PIK3R1, PLCG2, GRB2, SLA2 and CBL. Activation of PLCG2 leads to the production of the cellular signaling molecules diacylglycerol and inositol 1,4,5-trisphosphate, that then lead to the activation of protein kinase C family members, especially PRKCD. Phosphorylation of PIK3R1, the regulatory subunit of phosphatidylinositol 3-kinase, leads to activation of the AKT1 signaling pathway. Activated CSF1R also mediates activation of the MAP kinases MAPK1/ERK2 and/or MAPK3/ERK1, and of the SRC family kinases SRC, FYN and YES1. Activated CSF1R transmits signals both via proteins that directly interact with phosphorylated tyrosine residues in its intracellular domain, or via adapter proteins, such as GRB2. Promotes activation of STAT family members STAT3, STAT5A and/or STAT5B. Promotes tyrosine phosphorylation of SHC1 and INPP5D/SHIP-1. Receptor signaling is down-regulated by protein phosphatases, such as INPP5D/SHIP-1, that dephosphorylate the receptor and its downstream effectors, and by rapid internalization of the activated receptor (By similarity). In the central nervous system, may play a role in the development of microglia macrophages (By similarity).</text>
</comment>
<comment type="catalytic activity">
    <reaction evidence="7">
        <text>L-tyrosyl-[protein] + ATP = O-phospho-L-tyrosyl-[protein] + ADP + H(+)</text>
        <dbReference type="Rhea" id="RHEA:10596"/>
        <dbReference type="Rhea" id="RHEA-COMP:10136"/>
        <dbReference type="Rhea" id="RHEA-COMP:20101"/>
        <dbReference type="ChEBI" id="CHEBI:15378"/>
        <dbReference type="ChEBI" id="CHEBI:30616"/>
        <dbReference type="ChEBI" id="CHEBI:46858"/>
        <dbReference type="ChEBI" id="CHEBI:61978"/>
        <dbReference type="ChEBI" id="CHEBI:456216"/>
        <dbReference type="EC" id="2.7.10.1"/>
    </reaction>
</comment>
<comment type="activity regulation">
    <text evidence="1">Present in an inactive conformation in the absence of bound ligand. CSF1 or IL34 binding leads to dimerization and activation by autophosphorylation on tyrosine residues (By similarity).</text>
</comment>
<comment type="subunit">
    <text evidence="1">Monomer. Homodimer. Interacts with CSF1 and IL34. Interaction with dimeric CSF1 or IL34 leads to receptor homodimerization. Interacts with INPPL1/SHIP2 and THOC5. Interacts (tyrosine phosphorylated) with PLCG2 (via SH2 domain). Interacts (tyrosine phosphorylated) with PIK3R1 (via SH2 domain). Interacts (tyrosine phosphorylated) with FYN, YES1 and SRC (via SH2 domain). Interacts (tyrosine phosphorylated) with CBL, GRB2 and SLA2 (By similarity).</text>
</comment>
<comment type="subcellular location">
    <subcellularLocation>
        <location>Cell membrane</location>
        <topology>Single-pass type I membrane protein</topology>
    </subcellularLocation>
    <text evidence="1">The autophosphorylated receptor is ubiquitinated and internalized, leading to its degradation.</text>
</comment>
<comment type="domain">
    <text evidence="1">The juxtamembrane domain functions as autoinhibitory region. Phosphorylation of tyrosine residues in this region leads to a conformation change and activation of the kinase (By similarity).</text>
</comment>
<comment type="domain">
    <text evidence="1">The activation loop plays an important role in the regulation of kinase activity. Phosphorylation of tyrosine residues in this region leads to a conformation change and activation of the kinase (By similarity).</text>
</comment>
<comment type="PTM">
    <text evidence="1">Autophosphorylated in response to CSF1 or IL34 binding. Phosphorylation at Tyr-558 is important for normal down-regulation of signaling by ubiquitination, internalization and degradation. Phosphorylation at Tyr-558 and Tyr-807 is important for interaction with SRC family members, including FYN, YES1 and SRC, and for subsequent activation of these protein kinases. Phosphorylation at Tyr-696 and Tyr-921 is important for interaction with GRB2. Phosphorylation at Tyr-720 is important for interaction with PIK3R1. Phosphorylation at Tyr-720 and Tyr-807 is important for interaction with PLCG2. Phosphorylation at Tyr-977 is important for interaction with CBL. Dephosphorylation by PTPN2 negatively regulates downstream signaling and macrophage differentiation (By similarity).</text>
</comment>
<comment type="PTM">
    <text evidence="1">Ubiquitinated. Becomes rapidly polyubiquitinated after autophosphorylation, leading to its degradation (By similarity).</text>
</comment>
<comment type="similarity">
    <text evidence="6">Belongs to the protein kinase superfamily. Tyr protein kinase family. CSF-1/PDGF receptor subfamily.</text>
</comment>
<reference key="1">
    <citation type="journal article" date="1988" name="Cell">
        <title>Activation of the feline c-fms proto-oncogene: multiple alterations are required to generate a fully transformed phenotype.</title>
        <authorList>
            <person name="Woolford J."/>
            <person name="McAuliffe A."/>
            <person name="Rohrschneider L.R."/>
        </authorList>
    </citation>
    <scope>NUCLEOTIDE SEQUENCE [MRNA]</scope>
</reference>
<dbReference type="EC" id="2.7.10.1"/>
<dbReference type="EMBL" id="J03149">
    <property type="protein sequence ID" value="AAA30811.1"/>
    <property type="molecule type" value="mRNA"/>
</dbReference>
<dbReference type="PIR" id="A31636">
    <property type="entry name" value="TVCTMD"/>
</dbReference>
<dbReference type="RefSeq" id="NP_001009231.1">
    <property type="nucleotide sequence ID" value="NM_001009231.1"/>
</dbReference>
<dbReference type="SMR" id="P13369"/>
<dbReference type="STRING" id="9685.ENSFCAP00000003348"/>
<dbReference type="GlyCosmos" id="P13369">
    <property type="glycosylation" value="11 sites, No reported glycans"/>
</dbReference>
<dbReference type="PaxDb" id="9685-ENSFCAP00000003348"/>
<dbReference type="GeneID" id="493706"/>
<dbReference type="KEGG" id="fca:493706"/>
<dbReference type="CTD" id="1436"/>
<dbReference type="eggNOG" id="KOG0200">
    <property type="taxonomic scope" value="Eukaryota"/>
</dbReference>
<dbReference type="InParanoid" id="P13369"/>
<dbReference type="OrthoDB" id="6077854at2759"/>
<dbReference type="Proteomes" id="UP000011712">
    <property type="component" value="Unplaced"/>
</dbReference>
<dbReference type="GO" id="GO:0009986">
    <property type="term" value="C:cell surface"/>
    <property type="evidence" value="ECO:0000250"/>
    <property type="project" value="UniProtKB"/>
</dbReference>
<dbReference type="GO" id="GO:1990682">
    <property type="term" value="C:CSF1-CSF1R complex"/>
    <property type="evidence" value="ECO:0000318"/>
    <property type="project" value="GO_Central"/>
</dbReference>
<dbReference type="GO" id="GO:0005886">
    <property type="term" value="C:plasma membrane"/>
    <property type="evidence" value="ECO:0000318"/>
    <property type="project" value="GO_Central"/>
</dbReference>
<dbReference type="GO" id="GO:0043235">
    <property type="term" value="C:receptor complex"/>
    <property type="evidence" value="ECO:0000318"/>
    <property type="project" value="GO_Central"/>
</dbReference>
<dbReference type="GO" id="GO:0005524">
    <property type="term" value="F:ATP binding"/>
    <property type="evidence" value="ECO:0007669"/>
    <property type="project" value="UniProtKB-KW"/>
</dbReference>
<dbReference type="GO" id="GO:0019955">
    <property type="term" value="F:cytokine binding"/>
    <property type="evidence" value="ECO:0000250"/>
    <property type="project" value="UniProtKB"/>
</dbReference>
<dbReference type="GO" id="GO:0019838">
    <property type="term" value="F:growth factor binding"/>
    <property type="evidence" value="ECO:0000318"/>
    <property type="project" value="GO_Central"/>
</dbReference>
<dbReference type="GO" id="GO:0005011">
    <property type="term" value="F:macrophage colony-stimulating factor receptor activity"/>
    <property type="evidence" value="ECO:0000250"/>
    <property type="project" value="UniProtKB"/>
</dbReference>
<dbReference type="GO" id="GO:0016477">
    <property type="term" value="P:cell migration"/>
    <property type="evidence" value="ECO:0000318"/>
    <property type="project" value="GO_Central"/>
</dbReference>
<dbReference type="GO" id="GO:0007169">
    <property type="term" value="P:cell surface receptor protein tyrosine kinase signaling pathway"/>
    <property type="evidence" value="ECO:0000250"/>
    <property type="project" value="UniProtKB"/>
</dbReference>
<dbReference type="GO" id="GO:0071345">
    <property type="term" value="P:cellular response to cytokine stimulus"/>
    <property type="evidence" value="ECO:0000250"/>
    <property type="project" value="UniProtKB"/>
</dbReference>
<dbReference type="GO" id="GO:0036006">
    <property type="term" value="P:cellular response to macrophage colony-stimulating factor stimulus"/>
    <property type="evidence" value="ECO:0000250"/>
    <property type="project" value="UniProtKB"/>
</dbReference>
<dbReference type="GO" id="GO:0006954">
    <property type="term" value="P:inflammatory response"/>
    <property type="evidence" value="ECO:0007669"/>
    <property type="project" value="UniProtKB-KW"/>
</dbReference>
<dbReference type="GO" id="GO:0045087">
    <property type="term" value="P:innate immune response"/>
    <property type="evidence" value="ECO:0007669"/>
    <property type="project" value="UniProtKB-KW"/>
</dbReference>
<dbReference type="GO" id="GO:0030316">
    <property type="term" value="P:osteoclast differentiation"/>
    <property type="evidence" value="ECO:0000250"/>
    <property type="project" value="UniProtKB"/>
</dbReference>
<dbReference type="GO" id="GO:0018108">
    <property type="term" value="P:peptidyl-tyrosine phosphorylation"/>
    <property type="evidence" value="ECO:0000250"/>
    <property type="project" value="UniProtKB"/>
</dbReference>
<dbReference type="GO" id="GO:0030335">
    <property type="term" value="P:positive regulation of cell migration"/>
    <property type="evidence" value="ECO:0000318"/>
    <property type="project" value="GO_Central"/>
</dbReference>
<dbReference type="GO" id="GO:0008284">
    <property type="term" value="P:positive regulation of cell population proliferation"/>
    <property type="evidence" value="ECO:0000250"/>
    <property type="project" value="UniProtKB"/>
</dbReference>
<dbReference type="GO" id="GO:0070374">
    <property type="term" value="P:positive regulation of ERK1 and ERK2 cascade"/>
    <property type="evidence" value="ECO:0000250"/>
    <property type="project" value="UniProtKB"/>
</dbReference>
<dbReference type="GO" id="GO:0051897">
    <property type="term" value="P:positive regulation of phosphatidylinositol 3-kinase/protein kinase B signal transduction"/>
    <property type="evidence" value="ECO:0000250"/>
    <property type="project" value="UniProtKB"/>
</dbReference>
<dbReference type="GO" id="GO:0042531">
    <property type="term" value="P:positive regulation of tyrosine phosphorylation of STAT protein"/>
    <property type="evidence" value="ECO:0000250"/>
    <property type="project" value="UniProtKB"/>
</dbReference>
<dbReference type="GO" id="GO:0046777">
    <property type="term" value="P:protein autophosphorylation"/>
    <property type="evidence" value="ECO:0000250"/>
    <property type="project" value="UniProtKB"/>
</dbReference>
<dbReference type="GO" id="GO:0032956">
    <property type="term" value="P:regulation of actin cytoskeleton organization"/>
    <property type="evidence" value="ECO:0000250"/>
    <property type="project" value="UniProtKB"/>
</dbReference>
<dbReference type="GO" id="GO:0045124">
    <property type="term" value="P:regulation of bone resorption"/>
    <property type="evidence" value="ECO:0000250"/>
    <property type="project" value="UniProtKB"/>
</dbReference>
<dbReference type="GO" id="GO:0008360">
    <property type="term" value="P:regulation of cell shape"/>
    <property type="evidence" value="ECO:0000250"/>
    <property type="project" value="UniProtKB"/>
</dbReference>
<dbReference type="GO" id="GO:1905521">
    <property type="term" value="P:regulation of macrophage migration"/>
    <property type="evidence" value="ECO:0000250"/>
    <property type="project" value="UniProtKB"/>
</dbReference>
<dbReference type="GO" id="GO:0043408">
    <property type="term" value="P:regulation of MAPK cascade"/>
    <property type="evidence" value="ECO:0000318"/>
    <property type="project" value="GO_Central"/>
</dbReference>
<dbReference type="GO" id="GO:0031529">
    <property type="term" value="P:ruffle organization"/>
    <property type="evidence" value="ECO:0000250"/>
    <property type="project" value="UniProtKB"/>
</dbReference>
<dbReference type="CDD" id="cd00096">
    <property type="entry name" value="Ig"/>
    <property type="match status" value="1"/>
</dbReference>
<dbReference type="CDD" id="cd20936">
    <property type="entry name" value="IgI_3_CSF-1R"/>
    <property type="match status" value="1"/>
</dbReference>
<dbReference type="FunFam" id="2.60.40.10:FF:001029">
    <property type="entry name" value="Macrophage colony-stimulating factor 1 receptor"/>
    <property type="match status" value="1"/>
</dbReference>
<dbReference type="FunFam" id="2.60.40.10:FF:001088">
    <property type="entry name" value="Macrophage colony-stimulating factor 1 receptor"/>
    <property type="match status" value="1"/>
</dbReference>
<dbReference type="FunFam" id="2.60.40.10:FF:001101">
    <property type="entry name" value="Macrophage colony-stimulating factor 1 receptor"/>
    <property type="match status" value="1"/>
</dbReference>
<dbReference type="FunFam" id="2.60.40.10:FF:001160">
    <property type="entry name" value="Macrophage colony-stimulating factor 1 receptor"/>
    <property type="match status" value="1"/>
</dbReference>
<dbReference type="FunFam" id="2.60.40.10:FF:001169">
    <property type="entry name" value="Macrophage colony-stimulating factor 1 receptor"/>
    <property type="match status" value="1"/>
</dbReference>
<dbReference type="FunFam" id="1.10.510.10:FF:000177">
    <property type="entry name" value="Mast/stem cell growth factor receptor"/>
    <property type="match status" value="1"/>
</dbReference>
<dbReference type="FunFam" id="3.30.200.20:FF:000025">
    <property type="entry name" value="Platelet-derived growth factor receptor alpha"/>
    <property type="match status" value="1"/>
</dbReference>
<dbReference type="Gene3D" id="2.60.40.10">
    <property type="entry name" value="Immunoglobulins"/>
    <property type="match status" value="5"/>
</dbReference>
<dbReference type="Gene3D" id="3.30.200.20">
    <property type="entry name" value="Phosphorylase Kinase, domain 1"/>
    <property type="match status" value="1"/>
</dbReference>
<dbReference type="Gene3D" id="1.10.510.10">
    <property type="entry name" value="Transferase(Phosphotransferase) domain 1"/>
    <property type="match status" value="1"/>
</dbReference>
<dbReference type="InterPro" id="IPR030658">
    <property type="entry name" value="CSF-1_receptor"/>
</dbReference>
<dbReference type="InterPro" id="IPR007110">
    <property type="entry name" value="Ig-like_dom"/>
</dbReference>
<dbReference type="InterPro" id="IPR036179">
    <property type="entry name" value="Ig-like_dom_sf"/>
</dbReference>
<dbReference type="InterPro" id="IPR013783">
    <property type="entry name" value="Ig-like_fold"/>
</dbReference>
<dbReference type="InterPro" id="IPR003599">
    <property type="entry name" value="Ig_sub"/>
</dbReference>
<dbReference type="InterPro" id="IPR003598">
    <property type="entry name" value="Ig_sub2"/>
</dbReference>
<dbReference type="InterPro" id="IPR013151">
    <property type="entry name" value="Immunoglobulin_dom"/>
</dbReference>
<dbReference type="InterPro" id="IPR011009">
    <property type="entry name" value="Kinase-like_dom_sf"/>
</dbReference>
<dbReference type="InterPro" id="IPR000719">
    <property type="entry name" value="Prot_kinase_dom"/>
</dbReference>
<dbReference type="InterPro" id="IPR017441">
    <property type="entry name" value="Protein_kinase_ATP_BS"/>
</dbReference>
<dbReference type="InterPro" id="IPR050122">
    <property type="entry name" value="RTK"/>
</dbReference>
<dbReference type="InterPro" id="IPR001245">
    <property type="entry name" value="Ser-Thr/Tyr_kinase_cat_dom"/>
</dbReference>
<dbReference type="InterPro" id="IPR008266">
    <property type="entry name" value="Tyr_kinase_AS"/>
</dbReference>
<dbReference type="InterPro" id="IPR020635">
    <property type="entry name" value="Tyr_kinase_cat_dom"/>
</dbReference>
<dbReference type="InterPro" id="IPR001824">
    <property type="entry name" value="Tyr_kinase_rcpt_3_CS"/>
</dbReference>
<dbReference type="PANTHER" id="PTHR24416:SF47">
    <property type="entry name" value="MACROPHAGE COLONY-STIMULATING FACTOR 1 RECEPTOR"/>
    <property type="match status" value="1"/>
</dbReference>
<dbReference type="PANTHER" id="PTHR24416">
    <property type="entry name" value="TYROSINE-PROTEIN KINASE RECEPTOR"/>
    <property type="match status" value="1"/>
</dbReference>
<dbReference type="Pfam" id="PF00047">
    <property type="entry name" value="ig"/>
    <property type="match status" value="1"/>
</dbReference>
<dbReference type="Pfam" id="PF25305">
    <property type="entry name" value="Ig_PDGFR_d4"/>
    <property type="match status" value="1"/>
</dbReference>
<dbReference type="Pfam" id="PF07714">
    <property type="entry name" value="PK_Tyr_Ser-Thr"/>
    <property type="match status" value="1"/>
</dbReference>
<dbReference type="PIRSF" id="PIRSF500947">
    <property type="entry name" value="CSF-1_receptor"/>
    <property type="match status" value="1"/>
</dbReference>
<dbReference type="PIRSF" id="PIRSF000615">
    <property type="entry name" value="TyrPK_CSF1-R"/>
    <property type="match status" value="1"/>
</dbReference>
<dbReference type="SMART" id="SM00409">
    <property type="entry name" value="IG"/>
    <property type="match status" value="4"/>
</dbReference>
<dbReference type="SMART" id="SM00408">
    <property type="entry name" value="IGc2"/>
    <property type="match status" value="4"/>
</dbReference>
<dbReference type="SMART" id="SM00219">
    <property type="entry name" value="TyrKc"/>
    <property type="match status" value="1"/>
</dbReference>
<dbReference type="SUPFAM" id="SSF48726">
    <property type="entry name" value="Immunoglobulin"/>
    <property type="match status" value="5"/>
</dbReference>
<dbReference type="SUPFAM" id="SSF56112">
    <property type="entry name" value="Protein kinase-like (PK-like)"/>
    <property type="match status" value="1"/>
</dbReference>
<dbReference type="PROSITE" id="PS50835">
    <property type="entry name" value="IG_LIKE"/>
    <property type="match status" value="3"/>
</dbReference>
<dbReference type="PROSITE" id="PS00107">
    <property type="entry name" value="PROTEIN_KINASE_ATP"/>
    <property type="match status" value="1"/>
</dbReference>
<dbReference type="PROSITE" id="PS50011">
    <property type="entry name" value="PROTEIN_KINASE_DOM"/>
    <property type="match status" value="1"/>
</dbReference>
<dbReference type="PROSITE" id="PS00109">
    <property type="entry name" value="PROTEIN_KINASE_TYR"/>
    <property type="match status" value="1"/>
</dbReference>
<dbReference type="PROSITE" id="PS00240">
    <property type="entry name" value="RECEPTOR_TYR_KIN_III"/>
    <property type="match status" value="1"/>
</dbReference>
<protein>
    <recommendedName>
        <fullName>Macrophage colony-stimulating factor 1 receptor</fullName>
    </recommendedName>
    <alternativeName>
        <fullName>CSF-1 receptor</fullName>
        <shortName>CSF-1-R</shortName>
        <shortName>CSF-1R</shortName>
        <shortName>M-CSF-R</shortName>
        <ecNumber>2.7.10.1</ecNumber>
    </alternativeName>
    <alternativeName>
        <fullName>Proto-oncogene c-Fms</fullName>
    </alternativeName>
    <cdAntigenName>CD115</cdAntigenName>
</protein>